<proteinExistence type="inferred from homology"/>
<name>SYR_BIFA0</name>
<protein>
    <recommendedName>
        <fullName evidence="1">Arginine--tRNA ligase</fullName>
        <ecNumber evidence="1">6.1.1.19</ecNumber>
    </recommendedName>
    <alternativeName>
        <fullName evidence="1">Arginyl-tRNA synthetase</fullName>
        <shortName evidence="1">ArgRS</shortName>
    </alternativeName>
</protein>
<keyword id="KW-0030">Aminoacyl-tRNA synthetase</keyword>
<keyword id="KW-0067">ATP-binding</keyword>
<keyword id="KW-0963">Cytoplasm</keyword>
<keyword id="KW-0436">Ligase</keyword>
<keyword id="KW-0547">Nucleotide-binding</keyword>
<keyword id="KW-0648">Protein biosynthesis</keyword>
<keyword id="KW-1185">Reference proteome</keyword>
<feature type="chain" id="PRO_1000198874" description="Arginine--tRNA ligase">
    <location>
        <begin position="1"/>
        <end position="598"/>
    </location>
</feature>
<feature type="region of interest" description="Disordered" evidence="2">
    <location>
        <begin position="229"/>
        <end position="248"/>
    </location>
</feature>
<feature type="short sequence motif" description="'HIGH' region">
    <location>
        <begin position="135"/>
        <end position="145"/>
    </location>
</feature>
<feature type="compositionally biased region" description="Basic and acidic residues" evidence="2">
    <location>
        <begin position="231"/>
        <end position="248"/>
    </location>
</feature>
<comment type="catalytic activity">
    <reaction evidence="1">
        <text>tRNA(Arg) + L-arginine + ATP = L-arginyl-tRNA(Arg) + AMP + diphosphate</text>
        <dbReference type="Rhea" id="RHEA:20301"/>
        <dbReference type="Rhea" id="RHEA-COMP:9658"/>
        <dbReference type="Rhea" id="RHEA-COMP:9673"/>
        <dbReference type="ChEBI" id="CHEBI:30616"/>
        <dbReference type="ChEBI" id="CHEBI:32682"/>
        <dbReference type="ChEBI" id="CHEBI:33019"/>
        <dbReference type="ChEBI" id="CHEBI:78442"/>
        <dbReference type="ChEBI" id="CHEBI:78513"/>
        <dbReference type="ChEBI" id="CHEBI:456215"/>
        <dbReference type="EC" id="6.1.1.19"/>
    </reaction>
</comment>
<comment type="subunit">
    <text evidence="1">Monomer.</text>
</comment>
<comment type="subcellular location">
    <subcellularLocation>
        <location evidence="1">Cytoplasm</location>
    </subcellularLocation>
</comment>
<comment type="similarity">
    <text evidence="1">Belongs to the class-I aminoacyl-tRNA synthetase family.</text>
</comment>
<evidence type="ECO:0000255" key="1">
    <source>
        <dbReference type="HAMAP-Rule" id="MF_00123"/>
    </source>
</evidence>
<evidence type="ECO:0000256" key="2">
    <source>
        <dbReference type="SAM" id="MobiDB-lite"/>
    </source>
</evidence>
<gene>
    <name evidence="1" type="primary">argS</name>
    <name type="ordered locus">BLA_0618</name>
</gene>
<sequence length="598" mass="65586">MSPEALQELIFTIANNLVSEGKAGTLTAEELPDSAKFAVMRPKDRAHGDWASNAAMQLAKKAGMKPRDLAQLFADALNGTDGIAAVEVAGPGFINITLDSASAAAVVDQVLDEGNRFGKNNHLSGKTLNLEFVSANPTGPIHIGGTRWAAVGDSMARILQANGATVVREYYFNDHGEQINRFAKSLVAAAHDEPTPVDGYKGAYIDEIARRVIVEANAEGIDILNLPRVDGGTDEKGEPLGEGDSEQREEFRKRAVPMMFDEIRQSMKEFRVHFDVWFHENSLYEDGEVEKAIADLRNAGDIYEKDGATWFESTEHGDDKDRVIIKSDGTYAYFAADIAYYRNKRHRKTDPADVAIYMLGADHHGYIGRMMAMCAAFGDKPGENMQILIGQMVNVMKDGKPVRMSKRAGNIVTIDDLIDAIGVDASRYSLARTDYNSPVDIDLNLLASHSNDNPVYYVQYAHARSCNVDRNAEAAQINAADADLSLLDTEADGEVIAALAQWPALLTLAGDLRAPHRIAHYLEDLAAAYHKWYNVERVVPMPLTEAEERADEQTRERTRIAKNPEPARAAARLKLNDAVQTVIAEGLDLLGVTAPDKM</sequence>
<accession>B8DWR0</accession>
<dbReference type="EC" id="6.1.1.19" evidence="1"/>
<dbReference type="EMBL" id="CP001213">
    <property type="protein sequence ID" value="ACL28911.1"/>
    <property type="molecule type" value="Genomic_DNA"/>
</dbReference>
<dbReference type="RefSeq" id="WP_004269231.1">
    <property type="nucleotide sequence ID" value="NC_011835.1"/>
</dbReference>
<dbReference type="SMR" id="B8DWR0"/>
<dbReference type="STRING" id="442563.BLA_0618"/>
<dbReference type="GeneID" id="29696074"/>
<dbReference type="KEGG" id="bla:BLA_0618"/>
<dbReference type="HOGENOM" id="CLU_006406_0_1_11"/>
<dbReference type="Proteomes" id="UP000002456">
    <property type="component" value="Chromosome"/>
</dbReference>
<dbReference type="GO" id="GO:0005737">
    <property type="term" value="C:cytoplasm"/>
    <property type="evidence" value="ECO:0007669"/>
    <property type="project" value="UniProtKB-SubCell"/>
</dbReference>
<dbReference type="GO" id="GO:0004814">
    <property type="term" value="F:arginine-tRNA ligase activity"/>
    <property type="evidence" value="ECO:0007669"/>
    <property type="project" value="UniProtKB-UniRule"/>
</dbReference>
<dbReference type="GO" id="GO:0005524">
    <property type="term" value="F:ATP binding"/>
    <property type="evidence" value="ECO:0007669"/>
    <property type="project" value="UniProtKB-UniRule"/>
</dbReference>
<dbReference type="GO" id="GO:0006420">
    <property type="term" value="P:arginyl-tRNA aminoacylation"/>
    <property type="evidence" value="ECO:0007669"/>
    <property type="project" value="UniProtKB-UniRule"/>
</dbReference>
<dbReference type="CDD" id="cd00671">
    <property type="entry name" value="ArgRS_core"/>
    <property type="match status" value="1"/>
</dbReference>
<dbReference type="FunFam" id="3.40.50.620:FF:000062">
    <property type="entry name" value="Arginine--tRNA ligase"/>
    <property type="match status" value="1"/>
</dbReference>
<dbReference type="Gene3D" id="3.30.1360.70">
    <property type="entry name" value="Arginyl tRNA synthetase N-terminal domain"/>
    <property type="match status" value="1"/>
</dbReference>
<dbReference type="Gene3D" id="3.40.50.620">
    <property type="entry name" value="HUPs"/>
    <property type="match status" value="1"/>
</dbReference>
<dbReference type="Gene3D" id="1.10.730.10">
    <property type="entry name" value="Isoleucyl-tRNA Synthetase, Domain 1"/>
    <property type="match status" value="1"/>
</dbReference>
<dbReference type="HAMAP" id="MF_00123">
    <property type="entry name" value="Arg_tRNA_synth"/>
    <property type="match status" value="1"/>
</dbReference>
<dbReference type="InterPro" id="IPR001412">
    <property type="entry name" value="aa-tRNA-synth_I_CS"/>
</dbReference>
<dbReference type="InterPro" id="IPR001278">
    <property type="entry name" value="Arg-tRNA-ligase"/>
</dbReference>
<dbReference type="InterPro" id="IPR005148">
    <property type="entry name" value="Arg-tRNA-synth_N"/>
</dbReference>
<dbReference type="InterPro" id="IPR036695">
    <property type="entry name" value="Arg-tRNA-synth_N_sf"/>
</dbReference>
<dbReference type="InterPro" id="IPR035684">
    <property type="entry name" value="ArgRS_core"/>
</dbReference>
<dbReference type="InterPro" id="IPR008909">
    <property type="entry name" value="DALR_anticod-bd"/>
</dbReference>
<dbReference type="InterPro" id="IPR014729">
    <property type="entry name" value="Rossmann-like_a/b/a_fold"/>
</dbReference>
<dbReference type="InterPro" id="IPR009080">
    <property type="entry name" value="tRNAsynth_Ia_anticodon-bd"/>
</dbReference>
<dbReference type="NCBIfam" id="TIGR00456">
    <property type="entry name" value="argS"/>
    <property type="match status" value="1"/>
</dbReference>
<dbReference type="PANTHER" id="PTHR11956:SF5">
    <property type="entry name" value="ARGININE--TRNA LIGASE, CYTOPLASMIC"/>
    <property type="match status" value="1"/>
</dbReference>
<dbReference type="PANTHER" id="PTHR11956">
    <property type="entry name" value="ARGINYL-TRNA SYNTHETASE"/>
    <property type="match status" value="1"/>
</dbReference>
<dbReference type="Pfam" id="PF03485">
    <property type="entry name" value="Arg_tRNA_synt_N"/>
    <property type="match status" value="1"/>
</dbReference>
<dbReference type="Pfam" id="PF05746">
    <property type="entry name" value="DALR_1"/>
    <property type="match status" value="1"/>
</dbReference>
<dbReference type="Pfam" id="PF00750">
    <property type="entry name" value="tRNA-synt_1d"/>
    <property type="match status" value="1"/>
</dbReference>
<dbReference type="PRINTS" id="PR01038">
    <property type="entry name" value="TRNASYNTHARG"/>
</dbReference>
<dbReference type="SMART" id="SM01016">
    <property type="entry name" value="Arg_tRNA_synt_N"/>
    <property type="match status" value="1"/>
</dbReference>
<dbReference type="SMART" id="SM00836">
    <property type="entry name" value="DALR_1"/>
    <property type="match status" value="1"/>
</dbReference>
<dbReference type="SUPFAM" id="SSF47323">
    <property type="entry name" value="Anticodon-binding domain of a subclass of class I aminoacyl-tRNA synthetases"/>
    <property type="match status" value="1"/>
</dbReference>
<dbReference type="SUPFAM" id="SSF55190">
    <property type="entry name" value="Arginyl-tRNA synthetase (ArgRS), N-terminal 'additional' domain"/>
    <property type="match status" value="1"/>
</dbReference>
<dbReference type="SUPFAM" id="SSF52374">
    <property type="entry name" value="Nucleotidylyl transferase"/>
    <property type="match status" value="1"/>
</dbReference>
<dbReference type="PROSITE" id="PS00178">
    <property type="entry name" value="AA_TRNA_LIGASE_I"/>
    <property type="match status" value="1"/>
</dbReference>
<organism>
    <name type="scientific">Bifidobacterium animalis subsp. lactis (strain AD011)</name>
    <dbReference type="NCBI Taxonomy" id="442563"/>
    <lineage>
        <taxon>Bacteria</taxon>
        <taxon>Bacillati</taxon>
        <taxon>Actinomycetota</taxon>
        <taxon>Actinomycetes</taxon>
        <taxon>Bifidobacteriales</taxon>
        <taxon>Bifidobacteriaceae</taxon>
        <taxon>Bifidobacterium</taxon>
    </lineage>
</organism>
<reference key="1">
    <citation type="journal article" date="2009" name="J. Bacteriol.">
        <title>Genome sequence of the probiotic bacterium Bifidobacterium animalis subsp. lactis AD011.</title>
        <authorList>
            <person name="Kim J.F."/>
            <person name="Jeong H."/>
            <person name="Yu D.S."/>
            <person name="Choi S.-H."/>
            <person name="Hur C.-G."/>
            <person name="Park M.-S."/>
            <person name="Yoon S.H."/>
            <person name="Kim D.-W."/>
            <person name="Ji G.E."/>
            <person name="Park H.-S."/>
            <person name="Oh T.K."/>
        </authorList>
    </citation>
    <scope>NUCLEOTIDE SEQUENCE [LARGE SCALE GENOMIC DNA]</scope>
    <source>
        <strain>AD011</strain>
    </source>
</reference>